<feature type="chain" id="PRO_1000196190" description="Large ribosomal subunit protein bL36">
    <location>
        <begin position="1"/>
        <end position="46"/>
    </location>
</feature>
<evidence type="ECO:0000255" key="1">
    <source>
        <dbReference type="HAMAP-Rule" id="MF_00251"/>
    </source>
</evidence>
<evidence type="ECO:0000305" key="2"/>
<name>RL36_ECO7I</name>
<comment type="similarity">
    <text evidence="1">Belongs to the bacterial ribosomal protein bL36 family.</text>
</comment>
<sequence length="46" mass="5467">MKVLNSLRTAKERHPDCQIVKRKGRLYVICKSNPRFKAVQGRKKKR</sequence>
<protein>
    <recommendedName>
        <fullName evidence="1">Large ribosomal subunit protein bL36</fullName>
    </recommendedName>
    <alternativeName>
        <fullName evidence="2">50S ribosomal protein L36</fullName>
    </alternativeName>
</protein>
<gene>
    <name evidence="1" type="primary">rpmJ</name>
    <name type="ordered locus">ECIAI39_0395</name>
</gene>
<accession>B7NK71</accession>
<reference key="1">
    <citation type="journal article" date="2009" name="PLoS Genet.">
        <title>Organised genome dynamics in the Escherichia coli species results in highly diverse adaptive paths.</title>
        <authorList>
            <person name="Touchon M."/>
            <person name="Hoede C."/>
            <person name="Tenaillon O."/>
            <person name="Barbe V."/>
            <person name="Baeriswyl S."/>
            <person name="Bidet P."/>
            <person name="Bingen E."/>
            <person name="Bonacorsi S."/>
            <person name="Bouchier C."/>
            <person name="Bouvet O."/>
            <person name="Calteau A."/>
            <person name="Chiapello H."/>
            <person name="Clermont O."/>
            <person name="Cruveiller S."/>
            <person name="Danchin A."/>
            <person name="Diard M."/>
            <person name="Dossat C."/>
            <person name="Karoui M.E."/>
            <person name="Frapy E."/>
            <person name="Garry L."/>
            <person name="Ghigo J.M."/>
            <person name="Gilles A.M."/>
            <person name="Johnson J."/>
            <person name="Le Bouguenec C."/>
            <person name="Lescat M."/>
            <person name="Mangenot S."/>
            <person name="Martinez-Jehanne V."/>
            <person name="Matic I."/>
            <person name="Nassif X."/>
            <person name="Oztas S."/>
            <person name="Petit M.A."/>
            <person name="Pichon C."/>
            <person name="Rouy Z."/>
            <person name="Ruf C.S."/>
            <person name="Schneider D."/>
            <person name="Tourret J."/>
            <person name="Vacherie B."/>
            <person name="Vallenet D."/>
            <person name="Medigue C."/>
            <person name="Rocha E.P.C."/>
            <person name="Denamur E."/>
        </authorList>
    </citation>
    <scope>NUCLEOTIDE SEQUENCE [LARGE SCALE GENOMIC DNA]</scope>
    <source>
        <strain>IAI39 / ExPEC</strain>
    </source>
</reference>
<proteinExistence type="inferred from homology"/>
<dbReference type="EMBL" id="CU928164">
    <property type="protein sequence ID" value="CAR16535.1"/>
    <property type="molecule type" value="Genomic_DNA"/>
</dbReference>
<dbReference type="RefSeq" id="YP_002406432.1">
    <property type="nucleotide sequence ID" value="NC_011750.1"/>
</dbReference>
<dbReference type="SMR" id="B7NK71"/>
<dbReference type="STRING" id="585057.ECIAI39_0395"/>
<dbReference type="KEGG" id="ect:ECIAI39_0395"/>
<dbReference type="PATRIC" id="fig|585057.6.peg.424"/>
<dbReference type="HOGENOM" id="CLU_135723_3_1_6"/>
<dbReference type="Proteomes" id="UP000000749">
    <property type="component" value="Chromosome"/>
</dbReference>
<dbReference type="GO" id="GO:1990904">
    <property type="term" value="C:ribonucleoprotein complex"/>
    <property type="evidence" value="ECO:0007669"/>
    <property type="project" value="UniProtKB-KW"/>
</dbReference>
<dbReference type="GO" id="GO:0005840">
    <property type="term" value="C:ribosome"/>
    <property type="evidence" value="ECO:0007669"/>
    <property type="project" value="UniProtKB-KW"/>
</dbReference>
<dbReference type="GO" id="GO:0003735">
    <property type="term" value="F:structural constituent of ribosome"/>
    <property type="evidence" value="ECO:0007669"/>
    <property type="project" value="InterPro"/>
</dbReference>
<dbReference type="GO" id="GO:0006412">
    <property type="term" value="P:translation"/>
    <property type="evidence" value="ECO:0007669"/>
    <property type="project" value="UniProtKB-UniRule"/>
</dbReference>
<dbReference type="HAMAP" id="MF_00251">
    <property type="entry name" value="Ribosomal_bL36"/>
    <property type="match status" value="1"/>
</dbReference>
<dbReference type="InterPro" id="IPR000473">
    <property type="entry name" value="Ribosomal_bL36"/>
</dbReference>
<dbReference type="InterPro" id="IPR035977">
    <property type="entry name" value="Ribosomal_bL36_sp"/>
</dbReference>
<dbReference type="InterPro" id="IPR047621">
    <property type="entry name" value="Ribosomal_L36_bact"/>
</dbReference>
<dbReference type="NCBIfam" id="NF002021">
    <property type="entry name" value="PRK00831.1"/>
    <property type="match status" value="1"/>
</dbReference>
<dbReference type="NCBIfam" id="TIGR01022">
    <property type="entry name" value="rpmJ_bact"/>
    <property type="match status" value="1"/>
</dbReference>
<dbReference type="PANTHER" id="PTHR47781">
    <property type="entry name" value="50S RIBOSOMAL PROTEIN L36 2"/>
    <property type="match status" value="1"/>
</dbReference>
<dbReference type="PANTHER" id="PTHR47781:SF1">
    <property type="entry name" value="LARGE RIBOSOMAL SUBUNIT PROTEIN BL36B"/>
    <property type="match status" value="1"/>
</dbReference>
<dbReference type="Pfam" id="PF00444">
    <property type="entry name" value="Ribosomal_L36"/>
    <property type="match status" value="1"/>
</dbReference>
<dbReference type="SUPFAM" id="SSF57840">
    <property type="entry name" value="Ribosomal protein L36"/>
    <property type="match status" value="1"/>
</dbReference>
<dbReference type="PROSITE" id="PS00828">
    <property type="entry name" value="RIBOSOMAL_L36"/>
    <property type="match status" value="1"/>
</dbReference>
<keyword id="KW-0687">Ribonucleoprotein</keyword>
<keyword id="KW-0689">Ribosomal protein</keyword>
<organism>
    <name type="scientific">Escherichia coli O7:K1 (strain IAI39 / ExPEC)</name>
    <dbReference type="NCBI Taxonomy" id="585057"/>
    <lineage>
        <taxon>Bacteria</taxon>
        <taxon>Pseudomonadati</taxon>
        <taxon>Pseudomonadota</taxon>
        <taxon>Gammaproteobacteria</taxon>
        <taxon>Enterobacterales</taxon>
        <taxon>Enterobacteriaceae</taxon>
        <taxon>Escherichia</taxon>
    </lineage>
</organism>